<gene>
    <name type="primary">nreB</name>
    <name type="ordered locus">MW2314</name>
</gene>
<protein>
    <recommendedName>
        <fullName>Oxygen sensor histidine kinase NreB</fullName>
        <ecNumber>2.7.13.3</ecNumber>
    </recommendedName>
    <alternativeName>
        <fullName>Nitrogen regulation protein B</fullName>
    </alternativeName>
</protein>
<evidence type="ECO:0000250" key="1"/>
<evidence type="ECO:0000255" key="2"/>
<evidence type="ECO:0000255" key="3">
    <source>
        <dbReference type="PROSITE-ProRule" id="PRU00107"/>
    </source>
</evidence>
<evidence type="ECO:0000305" key="4"/>
<comment type="function">
    <text evidence="1">Member of the two-component regulatory system NreB/NreC involved in the control of dissimilatory nitrate/nitrite reduction in response to oxygen. NreB functions as a direct oxygen sensor histidine kinase which is autophosphorylated, in the absence of oxygen, probably at the conserved histidine residue, and transfers its phosphate group probably to a conserved aspartate residue of NreC. NreB/NreC activates the expression of the nitrate (narGHJI) and nitrite (nir) reductase operons, as well as the putative nitrate transporter gene narT (By similarity).</text>
</comment>
<comment type="catalytic activity">
    <reaction>
        <text>ATP + protein L-histidine = ADP + protein N-phospho-L-histidine.</text>
        <dbReference type="EC" id="2.7.13.3"/>
    </reaction>
</comment>
<comment type="cofactor">
    <cofactor evidence="4">
        <name>[4Fe-4S] cluster</name>
        <dbReference type="ChEBI" id="CHEBI:49883"/>
    </cofactor>
    <text evidence="4">Binds 1 [4Fe-4S] cluster.</text>
</comment>
<comment type="subcellular location">
    <subcellularLocation>
        <location evidence="4">Cytoplasm</location>
    </subcellularLocation>
</comment>
<comment type="PTM">
    <text evidence="1">Autophosphorylated.</text>
</comment>
<sequence>MINEDSIQLDTLLKKYYEHSIEKIVFADDNGKIIAMNDAAKDILSEEDNYSAVANAICHRCEGYTNAYDVQSCKDCFLESMQVQATNFQVFMKTKDQKVMPFTATYQLIDQDRGIHAFTLQNVSSQIEQQEKLHQQRMMRKTISAQENERKRISRELHDSVIQEMLNVDVQLRLLKYQEDTTKLLEDAENIEYIVAKLIDDIRNMSVELRPASLDDLGLEAAFKSYFKQFEENYGIKIIYTSNIKNTRFDSDIETVVYRVVQEAILNALKYADVNEINVGIRQTGRHLVAEVIDAGNGFDPSSKPKGSGLGLYGMNERAELVSGSVNIETKIGEGTNVTLNIPI</sequence>
<reference key="1">
    <citation type="journal article" date="2002" name="Lancet">
        <title>Genome and virulence determinants of high virulence community-acquired MRSA.</title>
        <authorList>
            <person name="Baba T."/>
            <person name="Takeuchi F."/>
            <person name="Kuroda M."/>
            <person name="Yuzawa H."/>
            <person name="Aoki K."/>
            <person name="Oguchi A."/>
            <person name="Nagai Y."/>
            <person name="Iwama N."/>
            <person name="Asano K."/>
            <person name="Naimi T."/>
            <person name="Kuroda H."/>
            <person name="Cui L."/>
            <person name="Yamamoto K."/>
            <person name="Hiramatsu K."/>
        </authorList>
    </citation>
    <scope>NUCLEOTIDE SEQUENCE [LARGE SCALE GENOMIC DNA]</scope>
    <source>
        <strain>MW2</strain>
    </source>
</reference>
<dbReference type="EC" id="2.7.13.3"/>
<dbReference type="EMBL" id="BA000033">
    <property type="protein sequence ID" value="BAB96179.1"/>
    <property type="molecule type" value="Genomic_DNA"/>
</dbReference>
<dbReference type="RefSeq" id="WP_000606546.1">
    <property type="nucleotide sequence ID" value="NC_003923.1"/>
</dbReference>
<dbReference type="SMR" id="Q7A028"/>
<dbReference type="KEGG" id="sam:MW2314"/>
<dbReference type="HOGENOM" id="CLU_000445_114_0_9"/>
<dbReference type="GO" id="GO:0005737">
    <property type="term" value="C:cytoplasm"/>
    <property type="evidence" value="ECO:0007669"/>
    <property type="project" value="UniProtKB-SubCell"/>
</dbReference>
<dbReference type="GO" id="GO:0016020">
    <property type="term" value="C:membrane"/>
    <property type="evidence" value="ECO:0007669"/>
    <property type="project" value="InterPro"/>
</dbReference>
<dbReference type="GO" id="GO:0051539">
    <property type="term" value="F:4 iron, 4 sulfur cluster binding"/>
    <property type="evidence" value="ECO:0007669"/>
    <property type="project" value="UniProtKB-KW"/>
</dbReference>
<dbReference type="GO" id="GO:0005524">
    <property type="term" value="F:ATP binding"/>
    <property type="evidence" value="ECO:0007669"/>
    <property type="project" value="UniProtKB-KW"/>
</dbReference>
<dbReference type="GO" id="GO:0005506">
    <property type="term" value="F:iron ion binding"/>
    <property type="evidence" value="ECO:0007669"/>
    <property type="project" value="InterPro"/>
</dbReference>
<dbReference type="GO" id="GO:0000155">
    <property type="term" value="F:phosphorelay sensor kinase activity"/>
    <property type="evidence" value="ECO:0007669"/>
    <property type="project" value="InterPro"/>
</dbReference>
<dbReference type="GO" id="GO:0046983">
    <property type="term" value="F:protein dimerization activity"/>
    <property type="evidence" value="ECO:0007669"/>
    <property type="project" value="InterPro"/>
</dbReference>
<dbReference type="CDD" id="cd16917">
    <property type="entry name" value="HATPase_UhpB-NarQ-NarX-like"/>
    <property type="match status" value="1"/>
</dbReference>
<dbReference type="Gene3D" id="1.20.5.1930">
    <property type="match status" value="1"/>
</dbReference>
<dbReference type="Gene3D" id="3.30.565.10">
    <property type="entry name" value="Histidine kinase-like ATPase, C-terminal domain"/>
    <property type="match status" value="1"/>
</dbReference>
<dbReference type="InterPro" id="IPR036890">
    <property type="entry name" value="HATPase_C_sf"/>
</dbReference>
<dbReference type="InterPro" id="IPR005467">
    <property type="entry name" value="His_kinase_dom"/>
</dbReference>
<dbReference type="InterPro" id="IPR050482">
    <property type="entry name" value="Sensor_HK_TwoCompSys"/>
</dbReference>
<dbReference type="InterPro" id="IPR004358">
    <property type="entry name" value="Sig_transdc_His_kin-like_C"/>
</dbReference>
<dbReference type="InterPro" id="IPR011712">
    <property type="entry name" value="Sig_transdc_His_kin_sub3_dim/P"/>
</dbReference>
<dbReference type="InterPro" id="IPR017203">
    <property type="entry name" value="Sig_transdc_His_kinase_NreB"/>
</dbReference>
<dbReference type="PANTHER" id="PTHR24421">
    <property type="entry name" value="NITRATE/NITRITE SENSOR PROTEIN NARX-RELATED"/>
    <property type="match status" value="1"/>
</dbReference>
<dbReference type="PANTHER" id="PTHR24421:SF10">
    <property type="entry name" value="NITRATE_NITRITE SENSOR PROTEIN NARQ"/>
    <property type="match status" value="1"/>
</dbReference>
<dbReference type="Pfam" id="PF02518">
    <property type="entry name" value="HATPase_c"/>
    <property type="match status" value="1"/>
</dbReference>
<dbReference type="Pfam" id="PF07730">
    <property type="entry name" value="HisKA_3"/>
    <property type="match status" value="1"/>
</dbReference>
<dbReference type="PIRSF" id="PIRSF037432">
    <property type="entry name" value="STHK_NreB"/>
    <property type="match status" value="1"/>
</dbReference>
<dbReference type="PRINTS" id="PR00344">
    <property type="entry name" value="BCTRLSENSOR"/>
</dbReference>
<dbReference type="SMART" id="SM00387">
    <property type="entry name" value="HATPase_c"/>
    <property type="match status" value="1"/>
</dbReference>
<dbReference type="SUPFAM" id="SSF55874">
    <property type="entry name" value="ATPase domain of HSP90 chaperone/DNA topoisomerase II/histidine kinase"/>
    <property type="match status" value="1"/>
</dbReference>
<dbReference type="PROSITE" id="PS50109">
    <property type="entry name" value="HIS_KIN"/>
    <property type="match status" value="1"/>
</dbReference>
<proteinExistence type="inferred from homology"/>
<organism>
    <name type="scientific">Staphylococcus aureus (strain MW2)</name>
    <dbReference type="NCBI Taxonomy" id="196620"/>
    <lineage>
        <taxon>Bacteria</taxon>
        <taxon>Bacillati</taxon>
        <taxon>Bacillota</taxon>
        <taxon>Bacilli</taxon>
        <taxon>Bacillales</taxon>
        <taxon>Staphylococcaceae</taxon>
        <taxon>Staphylococcus</taxon>
    </lineage>
</organism>
<feature type="chain" id="PRO_0000349332" description="Oxygen sensor histidine kinase NreB">
    <location>
        <begin position="1"/>
        <end position="344"/>
    </location>
</feature>
<feature type="domain" description="Histidine kinase" evidence="3">
    <location>
        <begin position="152"/>
        <end position="344"/>
    </location>
</feature>
<feature type="binding site" evidence="2">
    <location>
        <position position="58"/>
    </location>
    <ligand>
        <name>[4Fe-4S] cluster</name>
        <dbReference type="ChEBI" id="CHEBI:49883"/>
    </ligand>
</feature>
<feature type="binding site" evidence="2">
    <location>
        <position position="61"/>
    </location>
    <ligand>
        <name>[4Fe-4S] cluster</name>
        <dbReference type="ChEBI" id="CHEBI:49883"/>
    </ligand>
</feature>
<feature type="binding site" evidence="2">
    <location>
        <position position="73"/>
    </location>
    <ligand>
        <name>[4Fe-4S] cluster</name>
        <dbReference type="ChEBI" id="CHEBI:49883"/>
    </ligand>
</feature>
<feature type="binding site" evidence="2">
    <location>
        <position position="76"/>
    </location>
    <ligand>
        <name>[4Fe-4S] cluster</name>
        <dbReference type="ChEBI" id="CHEBI:49883"/>
    </ligand>
</feature>
<feature type="modified residue" description="Phosphohistidine; by autocatalysis" evidence="3">
    <location>
        <position position="158"/>
    </location>
</feature>
<accession>Q7A028</accession>
<keyword id="KW-0004">4Fe-4S</keyword>
<keyword id="KW-0067">ATP-binding</keyword>
<keyword id="KW-0963">Cytoplasm</keyword>
<keyword id="KW-0408">Iron</keyword>
<keyword id="KW-0411">Iron-sulfur</keyword>
<keyword id="KW-0418">Kinase</keyword>
<keyword id="KW-0479">Metal-binding</keyword>
<keyword id="KW-0547">Nucleotide-binding</keyword>
<keyword id="KW-0597">Phosphoprotein</keyword>
<keyword id="KW-0808">Transferase</keyword>
<keyword id="KW-0902">Two-component regulatory system</keyword>
<name>NREB_STAAW</name>